<proteinExistence type="evidence at transcript level"/>
<dbReference type="EMBL" id="AK137758">
    <property type="protein sequence ID" value="BAE23492.1"/>
    <property type="molecule type" value="mRNA"/>
</dbReference>
<dbReference type="EMBL" id="AK142669">
    <property type="protein sequence ID" value="BAE25154.1"/>
    <property type="molecule type" value="mRNA"/>
</dbReference>
<dbReference type="EMBL" id="AL732309">
    <property type="status" value="NOT_ANNOTATED_CDS"/>
    <property type="molecule type" value="Genomic_DNA"/>
</dbReference>
<dbReference type="EMBL" id="BC024531">
    <property type="protein sequence ID" value="AAH24531.1"/>
    <property type="molecule type" value="mRNA"/>
</dbReference>
<dbReference type="EMBL" id="BC024539">
    <property type="protein sequence ID" value="AAH24539.1"/>
    <property type="molecule type" value="mRNA"/>
</dbReference>
<dbReference type="EMBL" id="BC004853">
    <property type="protein sequence ID" value="AAH04853.1"/>
    <property type="molecule type" value="mRNA"/>
</dbReference>
<dbReference type="CCDS" id="CCDS15763.1"/>
<dbReference type="RefSeq" id="NP_666229.1">
    <property type="nucleotide sequence ID" value="NM_146117.2"/>
</dbReference>
<dbReference type="SMR" id="Q91W20"/>
<dbReference type="FunCoup" id="Q91W20">
    <property type="interactions" value="133"/>
</dbReference>
<dbReference type="STRING" id="10090.ENSMUSP00000028337"/>
<dbReference type="iPTMnet" id="Q91W20"/>
<dbReference type="PhosphoSitePlus" id="Q91W20"/>
<dbReference type="PaxDb" id="10090-ENSMUSP00000028337"/>
<dbReference type="ProteomicsDB" id="287265"/>
<dbReference type="Antibodypedia" id="18941">
    <property type="antibodies" value="91 antibodies from 22 providers"/>
</dbReference>
<dbReference type="DNASU" id="227618"/>
<dbReference type="Ensembl" id="ENSMUST00000028337.7">
    <property type="protein sequence ID" value="ENSMUSP00000028337.7"/>
    <property type="gene ID" value="ENSMUSG00000026961.7"/>
</dbReference>
<dbReference type="GeneID" id="227618"/>
<dbReference type="KEGG" id="mmu:227618"/>
<dbReference type="UCSC" id="uc008irg.2">
    <property type="organism name" value="mouse"/>
</dbReference>
<dbReference type="AGR" id="MGI:2385129"/>
<dbReference type="CTD" id="389816"/>
<dbReference type="MGI" id="MGI:2385129">
    <property type="gene designation" value="Lrrc26"/>
</dbReference>
<dbReference type="VEuPathDB" id="HostDB:ENSMUSG00000026961"/>
<dbReference type="eggNOG" id="KOG0619">
    <property type="taxonomic scope" value="Eukaryota"/>
</dbReference>
<dbReference type="GeneTree" id="ENSGT00940000162780"/>
<dbReference type="HOGENOM" id="CLU_000288_18_10_1"/>
<dbReference type="InParanoid" id="Q91W20"/>
<dbReference type="OMA" id="DAAFSHC"/>
<dbReference type="OrthoDB" id="676979at2759"/>
<dbReference type="PhylomeDB" id="Q91W20"/>
<dbReference type="TreeFam" id="TF334689"/>
<dbReference type="BioGRID-ORCS" id="227618">
    <property type="hits" value="2 hits in 78 CRISPR screens"/>
</dbReference>
<dbReference type="PRO" id="PR:Q91W20"/>
<dbReference type="Proteomes" id="UP000000589">
    <property type="component" value="Chromosome 2"/>
</dbReference>
<dbReference type="RNAct" id="Q91W20">
    <property type="molecule type" value="protein"/>
</dbReference>
<dbReference type="Bgee" id="ENSMUSG00000026961">
    <property type="expression patterns" value="Expressed in ileum and 36 other cell types or tissues"/>
</dbReference>
<dbReference type="GO" id="GO:0005737">
    <property type="term" value="C:cytoplasm"/>
    <property type="evidence" value="ECO:0007669"/>
    <property type="project" value="UniProtKB-KW"/>
</dbReference>
<dbReference type="GO" id="GO:0005856">
    <property type="term" value="C:cytoskeleton"/>
    <property type="evidence" value="ECO:0007669"/>
    <property type="project" value="UniProtKB-SubCell"/>
</dbReference>
<dbReference type="GO" id="GO:0008076">
    <property type="term" value="C:voltage-gated potassium channel complex"/>
    <property type="evidence" value="ECO:0000250"/>
    <property type="project" value="UniProtKB"/>
</dbReference>
<dbReference type="GO" id="GO:0099104">
    <property type="term" value="F:potassium channel activator activity"/>
    <property type="evidence" value="ECO:0007669"/>
    <property type="project" value="Ensembl"/>
</dbReference>
<dbReference type="GO" id="GO:0015459">
    <property type="term" value="F:potassium channel regulator activity"/>
    <property type="evidence" value="ECO:0000250"/>
    <property type="project" value="UniProtKB"/>
</dbReference>
<dbReference type="GO" id="GO:0044325">
    <property type="term" value="F:transmembrane transporter binding"/>
    <property type="evidence" value="ECO:0007669"/>
    <property type="project" value="Ensembl"/>
</dbReference>
<dbReference type="GO" id="GO:0005249">
    <property type="term" value="F:voltage-gated potassium channel activity"/>
    <property type="evidence" value="ECO:0007669"/>
    <property type="project" value="Ensembl"/>
</dbReference>
<dbReference type="FunFam" id="3.80.10.10:FF:000015">
    <property type="entry name" value="Leucine rich repeat containing 38"/>
    <property type="match status" value="1"/>
</dbReference>
<dbReference type="Gene3D" id="3.80.10.10">
    <property type="entry name" value="Ribonuclease Inhibitor"/>
    <property type="match status" value="1"/>
</dbReference>
<dbReference type="InterPro" id="IPR000483">
    <property type="entry name" value="Cys-rich_flank_reg_C"/>
</dbReference>
<dbReference type="InterPro" id="IPR051432">
    <property type="entry name" value="KCNMA1_auxiliary"/>
</dbReference>
<dbReference type="InterPro" id="IPR001611">
    <property type="entry name" value="Leu-rich_rpt"/>
</dbReference>
<dbReference type="InterPro" id="IPR003591">
    <property type="entry name" value="Leu-rich_rpt_typical-subtyp"/>
</dbReference>
<dbReference type="InterPro" id="IPR032675">
    <property type="entry name" value="LRR_dom_sf"/>
</dbReference>
<dbReference type="PANTHER" id="PTHR46473">
    <property type="entry name" value="GH08155P"/>
    <property type="match status" value="1"/>
</dbReference>
<dbReference type="PANTHER" id="PTHR46473:SF2">
    <property type="entry name" value="LEUCINE-RICH REPEAT-CONTAINING PROTEIN 26"/>
    <property type="match status" value="1"/>
</dbReference>
<dbReference type="Pfam" id="PF13855">
    <property type="entry name" value="LRR_8"/>
    <property type="match status" value="2"/>
</dbReference>
<dbReference type="SMART" id="SM00369">
    <property type="entry name" value="LRR_TYP"/>
    <property type="match status" value="5"/>
</dbReference>
<dbReference type="SMART" id="SM00082">
    <property type="entry name" value="LRRCT"/>
    <property type="match status" value="1"/>
</dbReference>
<dbReference type="SUPFAM" id="SSF52058">
    <property type="entry name" value="L domain-like"/>
    <property type="match status" value="1"/>
</dbReference>
<dbReference type="PROSITE" id="PS51450">
    <property type="entry name" value="LRR"/>
    <property type="match status" value="6"/>
</dbReference>
<name>LRC26_MOUSE</name>
<evidence type="ECO:0000250" key="1"/>
<evidence type="ECO:0000255" key="2"/>
<evidence type="ECO:0000256" key="3">
    <source>
        <dbReference type="SAM" id="MobiDB-lite"/>
    </source>
</evidence>
<evidence type="ECO:0000305" key="4"/>
<gene>
    <name type="primary">Lrrc26</name>
</gene>
<feature type="signal peptide" evidence="1">
    <location>
        <begin position="1"/>
        <end position="26"/>
    </location>
</feature>
<feature type="chain" id="PRO_0000309361" description="Leucine-rich repeat-containing protein 26">
    <location>
        <begin position="27"/>
        <end position="331"/>
    </location>
</feature>
<feature type="topological domain" description="Extracellular" evidence="2">
    <location>
        <begin position="27"/>
        <end position="261"/>
    </location>
</feature>
<feature type="transmembrane region" description="Helical" evidence="2">
    <location>
        <begin position="262"/>
        <end position="282"/>
    </location>
</feature>
<feature type="topological domain" description="Cytoplasmic" evidence="2">
    <location>
        <begin position="283"/>
        <end position="331"/>
    </location>
</feature>
<feature type="domain" description="LRRNT">
    <location>
        <begin position="34"/>
        <end position="71"/>
    </location>
</feature>
<feature type="repeat" description="LRR 1">
    <location>
        <begin position="72"/>
        <end position="93"/>
    </location>
</feature>
<feature type="repeat" description="LRR 2">
    <location>
        <begin position="96"/>
        <end position="117"/>
    </location>
</feature>
<feature type="repeat" description="LRR 3">
    <location>
        <begin position="120"/>
        <end position="141"/>
    </location>
</feature>
<feature type="repeat" description="LRR 4">
    <location>
        <begin position="144"/>
        <end position="165"/>
    </location>
</feature>
<feature type="repeat" description="LRR 5">
    <location>
        <begin position="168"/>
        <end position="191"/>
    </location>
</feature>
<feature type="domain" description="LRRCT">
    <location>
        <begin position="201"/>
        <end position="255"/>
    </location>
</feature>
<feature type="region of interest" description="Disordered" evidence="3">
    <location>
        <begin position="310"/>
        <end position="331"/>
    </location>
</feature>
<feature type="disulfide bond" evidence="2">
    <location>
        <begin position="43"/>
        <end position="49"/>
    </location>
</feature>
<feature type="disulfide bond" evidence="2">
    <location>
        <begin position="47"/>
        <end position="57"/>
    </location>
</feature>
<feature type="disulfide bond" evidence="2">
    <location>
        <begin position="205"/>
        <end position="231"/>
    </location>
</feature>
<feature type="disulfide bond" evidence="2">
    <location>
        <begin position="207"/>
        <end position="253"/>
    </location>
</feature>
<feature type="sequence conflict" description="In Ref. 1; BAE23492." evidence="4" ref="1">
    <original>Q</original>
    <variation>R</variation>
    <location>
        <position position="330"/>
    </location>
</feature>
<reference key="1">
    <citation type="journal article" date="2005" name="Science">
        <title>The transcriptional landscape of the mammalian genome.</title>
        <authorList>
            <person name="Carninci P."/>
            <person name="Kasukawa T."/>
            <person name="Katayama S."/>
            <person name="Gough J."/>
            <person name="Frith M.C."/>
            <person name="Maeda N."/>
            <person name="Oyama R."/>
            <person name="Ravasi T."/>
            <person name="Lenhard B."/>
            <person name="Wells C."/>
            <person name="Kodzius R."/>
            <person name="Shimokawa K."/>
            <person name="Bajic V.B."/>
            <person name="Brenner S.E."/>
            <person name="Batalov S."/>
            <person name="Forrest A.R."/>
            <person name="Zavolan M."/>
            <person name="Davis M.J."/>
            <person name="Wilming L.G."/>
            <person name="Aidinis V."/>
            <person name="Allen J.E."/>
            <person name="Ambesi-Impiombato A."/>
            <person name="Apweiler R."/>
            <person name="Aturaliya R.N."/>
            <person name="Bailey T.L."/>
            <person name="Bansal M."/>
            <person name="Baxter L."/>
            <person name="Beisel K.W."/>
            <person name="Bersano T."/>
            <person name="Bono H."/>
            <person name="Chalk A.M."/>
            <person name="Chiu K.P."/>
            <person name="Choudhary V."/>
            <person name="Christoffels A."/>
            <person name="Clutterbuck D.R."/>
            <person name="Crowe M.L."/>
            <person name="Dalla E."/>
            <person name="Dalrymple B.P."/>
            <person name="de Bono B."/>
            <person name="Della Gatta G."/>
            <person name="di Bernardo D."/>
            <person name="Down T."/>
            <person name="Engstrom P."/>
            <person name="Fagiolini M."/>
            <person name="Faulkner G."/>
            <person name="Fletcher C.F."/>
            <person name="Fukushima T."/>
            <person name="Furuno M."/>
            <person name="Futaki S."/>
            <person name="Gariboldi M."/>
            <person name="Georgii-Hemming P."/>
            <person name="Gingeras T.R."/>
            <person name="Gojobori T."/>
            <person name="Green R.E."/>
            <person name="Gustincich S."/>
            <person name="Harbers M."/>
            <person name="Hayashi Y."/>
            <person name="Hensch T.K."/>
            <person name="Hirokawa N."/>
            <person name="Hill D."/>
            <person name="Huminiecki L."/>
            <person name="Iacono M."/>
            <person name="Ikeo K."/>
            <person name="Iwama A."/>
            <person name="Ishikawa T."/>
            <person name="Jakt M."/>
            <person name="Kanapin A."/>
            <person name="Katoh M."/>
            <person name="Kawasawa Y."/>
            <person name="Kelso J."/>
            <person name="Kitamura H."/>
            <person name="Kitano H."/>
            <person name="Kollias G."/>
            <person name="Krishnan S.P."/>
            <person name="Kruger A."/>
            <person name="Kummerfeld S.K."/>
            <person name="Kurochkin I.V."/>
            <person name="Lareau L.F."/>
            <person name="Lazarevic D."/>
            <person name="Lipovich L."/>
            <person name="Liu J."/>
            <person name="Liuni S."/>
            <person name="McWilliam S."/>
            <person name="Madan Babu M."/>
            <person name="Madera M."/>
            <person name="Marchionni L."/>
            <person name="Matsuda H."/>
            <person name="Matsuzawa S."/>
            <person name="Miki H."/>
            <person name="Mignone F."/>
            <person name="Miyake S."/>
            <person name="Morris K."/>
            <person name="Mottagui-Tabar S."/>
            <person name="Mulder N."/>
            <person name="Nakano N."/>
            <person name="Nakauchi H."/>
            <person name="Ng P."/>
            <person name="Nilsson R."/>
            <person name="Nishiguchi S."/>
            <person name="Nishikawa S."/>
            <person name="Nori F."/>
            <person name="Ohara O."/>
            <person name="Okazaki Y."/>
            <person name="Orlando V."/>
            <person name="Pang K.C."/>
            <person name="Pavan W.J."/>
            <person name="Pavesi G."/>
            <person name="Pesole G."/>
            <person name="Petrovsky N."/>
            <person name="Piazza S."/>
            <person name="Reed J."/>
            <person name="Reid J.F."/>
            <person name="Ring B.Z."/>
            <person name="Ringwald M."/>
            <person name="Rost B."/>
            <person name="Ruan Y."/>
            <person name="Salzberg S.L."/>
            <person name="Sandelin A."/>
            <person name="Schneider C."/>
            <person name="Schoenbach C."/>
            <person name="Sekiguchi K."/>
            <person name="Semple C.A."/>
            <person name="Seno S."/>
            <person name="Sessa L."/>
            <person name="Sheng Y."/>
            <person name="Shibata Y."/>
            <person name="Shimada H."/>
            <person name="Shimada K."/>
            <person name="Silva D."/>
            <person name="Sinclair B."/>
            <person name="Sperling S."/>
            <person name="Stupka E."/>
            <person name="Sugiura K."/>
            <person name="Sultana R."/>
            <person name="Takenaka Y."/>
            <person name="Taki K."/>
            <person name="Tammoja K."/>
            <person name="Tan S.L."/>
            <person name="Tang S."/>
            <person name="Taylor M.S."/>
            <person name="Tegner J."/>
            <person name="Teichmann S.A."/>
            <person name="Ueda H.R."/>
            <person name="van Nimwegen E."/>
            <person name="Verardo R."/>
            <person name="Wei C.L."/>
            <person name="Yagi K."/>
            <person name="Yamanishi H."/>
            <person name="Zabarovsky E."/>
            <person name="Zhu S."/>
            <person name="Zimmer A."/>
            <person name="Hide W."/>
            <person name="Bult C."/>
            <person name="Grimmond S.M."/>
            <person name="Teasdale R.D."/>
            <person name="Liu E.T."/>
            <person name="Brusic V."/>
            <person name="Quackenbush J."/>
            <person name="Wahlestedt C."/>
            <person name="Mattick J.S."/>
            <person name="Hume D.A."/>
            <person name="Kai C."/>
            <person name="Sasaki D."/>
            <person name="Tomaru Y."/>
            <person name="Fukuda S."/>
            <person name="Kanamori-Katayama M."/>
            <person name="Suzuki M."/>
            <person name="Aoki J."/>
            <person name="Arakawa T."/>
            <person name="Iida J."/>
            <person name="Imamura K."/>
            <person name="Itoh M."/>
            <person name="Kato T."/>
            <person name="Kawaji H."/>
            <person name="Kawagashira N."/>
            <person name="Kawashima T."/>
            <person name="Kojima M."/>
            <person name="Kondo S."/>
            <person name="Konno H."/>
            <person name="Nakano K."/>
            <person name="Ninomiya N."/>
            <person name="Nishio T."/>
            <person name="Okada M."/>
            <person name="Plessy C."/>
            <person name="Shibata K."/>
            <person name="Shiraki T."/>
            <person name="Suzuki S."/>
            <person name="Tagami M."/>
            <person name="Waki K."/>
            <person name="Watahiki A."/>
            <person name="Okamura-Oho Y."/>
            <person name="Suzuki H."/>
            <person name="Kawai J."/>
            <person name="Hayashizaki Y."/>
        </authorList>
    </citation>
    <scope>NUCLEOTIDE SEQUENCE [LARGE SCALE MRNA]</scope>
    <source>
        <strain>C57BL/6J</strain>
        <tissue>Mammary gland</tissue>
        <tissue>Skin</tissue>
    </source>
</reference>
<reference key="2">
    <citation type="journal article" date="2009" name="PLoS Biol.">
        <title>Lineage-specific biology revealed by a finished genome assembly of the mouse.</title>
        <authorList>
            <person name="Church D.M."/>
            <person name="Goodstadt L."/>
            <person name="Hillier L.W."/>
            <person name="Zody M.C."/>
            <person name="Goldstein S."/>
            <person name="She X."/>
            <person name="Bult C.J."/>
            <person name="Agarwala R."/>
            <person name="Cherry J.L."/>
            <person name="DiCuccio M."/>
            <person name="Hlavina W."/>
            <person name="Kapustin Y."/>
            <person name="Meric P."/>
            <person name="Maglott D."/>
            <person name="Birtle Z."/>
            <person name="Marques A.C."/>
            <person name="Graves T."/>
            <person name="Zhou S."/>
            <person name="Teague B."/>
            <person name="Potamousis K."/>
            <person name="Churas C."/>
            <person name="Place M."/>
            <person name="Herschleb J."/>
            <person name="Runnheim R."/>
            <person name="Forrest D."/>
            <person name="Amos-Landgraf J."/>
            <person name="Schwartz D.C."/>
            <person name="Cheng Z."/>
            <person name="Lindblad-Toh K."/>
            <person name="Eichler E.E."/>
            <person name="Ponting C.P."/>
        </authorList>
    </citation>
    <scope>NUCLEOTIDE SEQUENCE [LARGE SCALE GENOMIC DNA]</scope>
    <source>
        <strain>C57BL/6J</strain>
    </source>
</reference>
<reference key="3">
    <citation type="journal article" date="2004" name="Genome Res.">
        <title>The status, quality, and expansion of the NIH full-length cDNA project: the Mammalian Gene Collection (MGC).</title>
        <authorList>
            <consortium name="The MGC Project Team"/>
        </authorList>
    </citation>
    <scope>NUCLEOTIDE SEQUENCE [LARGE SCALE MRNA]</scope>
    <source>
        <strain>129</strain>
        <strain>FVB/N</strain>
        <tissue>Colon</tissue>
        <tissue>Mammary tumor</tissue>
    </source>
</reference>
<accession>Q91W20</accession>
<accession>Q3UUY1</accession>
<organism>
    <name type="scientific">Mus musculus</name>
    <name type="common">Mouse</name>
    <dbReference type="NCBI Taxonomy" id="10090"/>
    <lineage>
        <taxon>Eukaryota</taxon>
        <taxon>Metazoa</taxon>
        <taxon>Chordata</taxon>
        <taxon>Craniata</taxon>
        <taxon>Vertebrata</taxon>
        <taxon>Euteleostomi</taxon>
        <taxon>Mammalia</taxon>
        <taxon>Eutheria</taxon>
        <taxon>Euarchontoglires</taxon>
        <taxon>Glires</taxon>
        <taxon>Rodentia</taxon>
        <taxon>Myomorpha</taxon>
        <taxon>Muroidea</taxon>
        <taxon>Muridae</taxon>
        <taxon>Murinae</taxon>
        <taxon>Mus</taxon>
        <taxon>Mus</taxon>
    </lineage>
</organism>
<comment type="function">
    <text evidence="1">Auxiliary protein of the large-conductance, voltage and calcium-activated potassium channel (BK alpha). Required for the conversion of BK alpha channels from a high-voltage to a low-voltage activated channel type in non-excitable cells. These are characterized by negative membrane voltages and constant low levels of calcium (By similarity).</text>
</comment>
<comment type="subunit">
    <text evidence="1">Interacts with KCNMA1.</text>
</comment>
<comment type="subcellular location">
    <subcellularLocation>
        <location evidence="1">Cell membrane</location>
        <topology evidence="1">Single-pass type I membrane protein</topology>
    </subcellularLocation>
    <subcellularLocation>
        <location evidence="1">Cytoplasm</location>
        <location evidence="1">Cytoskeleton</location>
    </subcellularLocation>
    <text evidence="1">Localizes to the cytoplasm when expressed at high levels.</text>
</comment>
<comment type="domain">
    <text evidence="1">The transmembrane domain is necessary for interaction with KCNMA1.</text>
</comment>
<sequence length="331" mass="35696">MRGSFFSRLPPQLSLLLLLSLRRVWTQEDIGTAPSKSPVAPECPEACSCSLGGKANCSALALPAVPADLSWQVRSLLLDHNRVSALPPGAFANAGALLYLDLRENRLRSVHARAFWGLGVLQWLDLSSNQLETLPPGTFAPLRALSFLSLAGNRLALLEPSILGPLPLLRVLSLQDNSLSAIEAGLLNNLPALDVLRLHGNPWTCNCALRPLCTWLRKHPRPASETETLLCVSPRLQTLSLLTAFPDAAFKQCTQSLAARDLAVVYALGPVSFLASLAICLALGSVLTACGARRRRRRRTTVRHLLRRQLDPEGPPSLEDAGSPVTAAIQA</sequence>
<keyword id="KW-1003">Cell membrane</keyword>
<keyword id="KW-0963">Cytoplasm</keyword>
<keyword id="KW-0206">Cytoskeleton</keyword>
<keyword id="KW-1015">Disulfide bond</keyword>
<keyword id="KW-0407">Ion channel</keyword>
<keyword id="KW-0406">Ion transport</keyword>
<keyword id="KW-0433">Leucine-rich repeat</keyword>
<keyword id="KW-0472">Membrane</keyword>
<keyword id="KW-1185">Reference proteome</keyword>
<keyword id="KW-0677">Repeat</keyword>
<keyword id="KW-0732">Signal</keyword>
<keyword id="KW-0812">Transmembrane</keyword>
<keyword id="KW-1133">Transmembrane helix</keyword>
<keyword id="KW-0813">Transport</keyword>
<protein>
    <recommendedName>
        <fullName>Leucine-rich repeat-containing protein 26</fullName>
    </recommendedName>
    <alternativeName>
        <fullName>BK channel auxiliary gamma subunit LRRC26</fullName>
    </alternativeName>
</protein>